<feature type="chain" id="PRO_0000155968" description="dCTP deaminase">
    <location>
        <begin position="1"/>
        <end position="187"/>
    </location>
</feature>
<feature type="active site" description="Proton donor/acceptor" evidence="1">
    <location>
        <position position="136"/>
    </location>
</feature>
<feature type="binding site" evidence="1">
    <location>
        <begin position="110"/>
        <end position="115"/>
    </location>
    <ligand>
        <name>dCTP</name>
        <dbReference type="ChEBI" id="CHEBI:61481"/>
    </ligand>
</feature>
<feature type="binding site" evidence="1">
    <location>
        <begin position="134"/>
        <end position="136"/>
    </location>
    <ligand>
        <name>dCTP</name>
        <dbReference type="ChEBI" id="CHEBI:61481"/>
    </ligand>
</feature>
<feature type="binding site" evidence="1">
    <location>
        <position position="155"/>
    </location>
    <ligand>
        <name>dCTP</name>
        <dbReference type="ChEBI" id="CHEBI:61481"/>
    </ligand>
</feature>
<feature type="binding site" evidence="1">
    <location>
        <position position="169"/>
    </location>
    <ligand>
        <name>dCTP</name>
        <dbReference type="ChEBI" id="CHEBI:61481"/>
    </ligand>
</feature>
<feature type="binding site" evidence="1">
    <location>
        <position position="179"/>
    </location>
    <ligand>
        <name>dCTP</name>
        <dbReference type="ChEBI" id="CHEBI:61481"/>
    </ligand>
</feature>
<sequence>MSIKSDRWIRRAAEAGMIEPFEPGQVRTAGGNRIVSYGTSSYGYDVRCADEFKIFTNINSTIVDPKQFDEKSFVDFKGDVCIIPPNSFALARTVEYFRIPRSVLTICLGKSTYARCGIIVNVTPLEPEWEGHVTLEFSNTTPLPAKVYAGEGCAQMLFLESDEVCETSYRDRGGKYQGQRGVTLPRT</sequence>
<keyword id="KW-0378">Hydrolase</keyword>
<keyword id="KW-0546">Nucleotide metabolism</keyword>
<keyword id="KW-0547">Nucleotide-binding</keyword>
<keyword id="KW-1185">Reference proteome</keyword>
<organism>
    <name type="scientific">Bordetella pertussis (strain Tohama I / ATCC BAA-589 / NCTC 13251)</name>
    <dbReference type="NCBI Taxonomy" id="257313"/>
    <lineage>
        <taxon>Bacteria</taxon>
        <taxon>Pseudomonadati</taxon>
        <taxon>Pseudomonadota</taxon>
        <taxon>Betaproteobacteria</taxon>
        <taxon>Burkholderiales</taxon>
        <taxon>Alcaligenaceae</taxon>
        <taxon>Bordetella</taxon>
    </lineage>
</organism>
<dbReference type="EC" id="3.5.4.13" evidence="1"/>
<dbReference type="EMBL" id="BX640411">
    <property type="protein sequence ID" value="CAE40564.1"/>
    <property type="molecule type" value="Genomic_DNA"/>
</dbReference>
<dbReference type="RefSeq" id="NP_879075.1">
    <property type="nucleotide sequence ID" value="NC_002929.2"/>
</dbReference>
<dbReference type="RefSeq" id="WP_010929670.1">
    <property type="nucleotide sequence ID" value="NZ_CP039022.1"/>
</dbReference>
<dbReference type="SMR" id="Q7W0F2"/>
<dbReference type="STRING" id="257313.BP0185"/>
<dbReference type="PaxDb" id="257313-BP0185"/>
<dbReference type="GeneID" id="69603558"/>
<dbReference type="KEGG" id="bpe:BP0185"/>
<dbReference type="PATRIC" id="fig|257313.5.peg.195"/>
<dbReference type="eggNOG" id="COG0717">
    <property type="taxonomic scope" value="Bacteria"/>
</dbReference>
<dbReference type="HOGENOM" id="CLU_087476_4_0_4"/>
<dbReference type="UniPathway" id="UPA00610">
    <property type="reaction ID" value="UER00665"/>
</dbReference>
<dbReference type="Proteomes" id="UP000002676">
    <property type="component" value="Chromosome"/>
</dbReference>
<dbReference type="GO" id="GO:0008829">
    <property type="term" value="F:dCTP deaminase activity"/>
    <property type="evidence" value="ECO:0007669"/>
    <property type="project" value="UniProtKB-UniRule"/>
</dbReference>
<dbReference type="GO" id="GO:0000166">
    <property type="term" value="F:nucleotide binding"/>
    <property type="evidence" value="ECO:0007669"/>
    <property type="project" value="UniProtKB-KW"/>
</dbReference>
<dbReference type="GO" id="GO:0006226">
    <property type="term" value="P:dUMP biosynthetic process"/>
    <property type="evidence" value="ECO:0007669"/>
    <property type="project" value="UniProtKB-UniPathway"/>
</dbReference>
<dbReference type="GO" id="GO:0006229">
    <property type="term" value="P:dUTP biosynthetic process"/>
    <property type="evidence" value="ECO:0007669"/>
    <property type="project" value="UniProtKB-UniRule"/>
</dbReference>
<dbReference type="GO" id="GO:0015949">
    <property type="term" value="P:nucleobase-containing small molecule interconversion"/>
    <property type="evidence" value="ECO:0007669"/>
    <property type="project" value="TreeGrafter"/>
</dbReference>
<dbReference type="CDD" id="cd07557">
    <property type="entry name" value="trimeric_dUTPase"/>
    <property type="match status" value="1"/>
</dbReference>
<dbReference type="FunFam" id="2.70.40.10:FF:000001">
    <property type="entry name" value="dCTP deaminase"/>
    <property type="match status" value="1"/>
</dbReference>
<dbReference type="Gene3D" id="2.70.40.10">
    <property type="match status" value="1"/>
</dbReference>
<dbReference type="HAMAP" id="MF_00146">
    <property type="entry name" value="dCTP_deaminase"/>
    <property type="match status" value="1"/>
</dbReference>
<dbReference type="InterPro" id="IPR011962">
    <property type="entry name" value="dCTP_deaminase"/>
</dbReference>
<dbReference type="InterPro" id="IPR036157">
    <property type="entry name" value="dUTPase-like_sf"/>
</dbReference>
<dbReference type="InterPro" id="IPR033704">
    <property type="entry name" value="dUTPase_trimeric"/>
</dbReference>
<dbReference type="NCBIfam" id="TIGR02274">
    <property type="entry name" value="dCTP_deam"/>
    <property type="match status" value="1"/>
</dbReference>
<dbReference type="PANTHER" id="PTHR42680">
    <property type="entry name" value="DCTP DEAMINASE"/>
    <property type="match status" value="1"/>
</dbReference>
<dbReference type="PANTHER" id="PTHR42680:SF3">
    <property type="entry name" value="DCTP DEAMINASE"/>
    <property type="match status" value="1"/>
</dbReference>
<dbReference type="Pfam" id="PF22769">
    <property type="entry name" value="DCD"/>
    <property type="match status" value="1"/>
</dbReference>
<dbReference type="SUPFAM" id="SSF51283">
    <property type="entry name" value="dUTPase-like"/>
    <property type="match status" value="1"/>
</dbReference>
<gene>
    <name evidence="1" type="primary">dcd</name>
    <name type="ordered locus">BP0185</name>
</gene>
<proteinExistence type="inferred from homology"/>
<name>DCD_BORPE</name>
<protein>
    <recommendedName>
        <fullName evidence="1">dCTP deaminase</fullName>
        <ecNumber evidence="1">3.5.4.13</ecNumber>
    </recommendedName>
    <alternativeName>
        <fullName evidence="1">Deoxycytidine triphosphate deaminase</fullName>
    </alternativeName>
</protein>
<accession>Q7W0F2</accession>
<evidence type="ECO:0000255" key="1">
    <source>
        <dbReference type="HAMAP-Rule" id="MF_00146"/>
    </source>
</evidence>
<reference key="1">
    <citation type="journal article" date="2003" name="Nat. Genet.">
        <title>Comparative analysis of the genome sequences of Bordetella pertussis, Bordetella parapertussis and Bordetella bronchiseptica.</title>
        <authorList>
            <person name="Parkhill J."/>
            <person name="Sebaihia M."/>
            <person name="Preston A."/>
            <person name="Murphy L.D."/>
            <person name="Thomson N.R."/>
            <person name="Harris D.E."/>
            <person name="Holden M.T.G."/>
            <person name="Churcher C.M."/>
            <person name="Bentley S.D."/>
            <person name="Mungall K.L."/>
            <person name="Cerdeno-Tarraga A.-M."/>
            <person name="Temple L."/>
            <person name="James K.D."/>
            <person name="Harris B."/>
            <person name="Quail M.A."/>
            <person name="Achtman M."/>
            <person name="Atkin R."/>
            <person name="Baker S."/>
            <person name="Basham D."/>
            <person name="Bason N."/>
            <person name="Cherevach I."/>
            <person name="Chillingworth T."/>
            <person name="Collins M."/>
            <person name="Cronin A."/>
            <person name="Davis P."/>
            <person name="Doggett J."/>
            <person name="Feltwell T."/>
            <person name="Goble A."/>
            <person name="Hamlin N."/>
            <person name="Hauser H."/>
            <person name="Holroyd S."/>
            <person name="Jagels K."/>
            <person name="Leather S."/>
            <person name="Moule S."/>
            <person name="Norberczak H."/>
            <person name="O'Neil S."/>
            <person name="Ormond D."/>
            <person name="Price C."/>
            <person name="Rabbinowitsch E."/>
            <person name="Rutter S."/>
            <person name="Sanders M."/>
            <person name="Saunders D."/>
            <person name="Seeger K."/>
            <person name="Sharp S."/>
            <person name="Simmonds M."/>
            <person name="Skelton J."/>
            <person name="Squares R."/>
            <person name="Squares S."/>
            <person name="Stevens K."/>
            <person name="Unwin L."/>
            <person name="Whitehead S."/>
            <person name="Barrell B.G."/>
            <person name="Maskell D.J."/>
        </authorList>
    </citation>
    <scope>NUCLEOTIDE SEQUENCE [LARGE SCALE GENOMIC DNA]</scope>
    <source>
        <strain>Tohama I / ATCC BAA-589 / NCTC 13251</strain>
    </source>
</reference>
<comment type="function">
    <text evidence="1">Catalyzes the deamination of dCTP to dUTP.</text>
</comment>
<comment type="catalytic activity">
    <reaction evidence="1">
        <text>dCTP + H2O + H(+) = dUTP + NH4(+)</text>
        <dbReference type="Rhea" id="RHEA:22680"/>
        <dbReference type="ChEBI" id="CHEBI:15377"/>
        <dbReference type="ChEBI" id="CHEBI:15378"/>
        <dbReference type="ChEBI" id="CHEBI:28938"/>
        <dbReference type="ChEBI" id="CHEBI:61481"/>
        <dbReference type="ChEBI" id="CHEBI:61555"/>
        <dbReference type="EC" id="3.5.4.13"/>
    </reaction>
</comment>
<comment type="pathway">
    <text evidence="1">Pyrimidine metabolism; dUMP biosynthesis; dUMP from dCTP (dUTP route): step 1/2.</text>
</comment>
<comment type="subunit">
    <text evidence="1">Homotrimer.</text>
</comment>
<comment type="similarity">
    <text evidence="1">Belongs to the dCTP deaminase family.</text>
</comment>